<gene>
    <name evidence="1" type="primary">rplP</name>
    <name type="ordered locus">Sez_0063</name>
</gene>
<sequence>MLVPKRVKHRREFRGKMRGEAKGGKEVSFGEYGLQATTSSWITNRQIEAARIAMTRYMKRGGKVWIKIFPHKSYTAKAIGVRMGSGKGAPEGWVAPVKRGKVMFEVAGVSEEIAREALRLASHKLPVKCKFVKREAE</sequence>
<feature type="chain" id="PRO_1000143031" description="Large ribosomal subunit protein uL16">
    <location>
        <begin position="1"/>
        <end position="137"/>
    </location>
</feature>
<name>RL16_STREM</name>
<reference key="1">
    <citation type="journal article" date="2008" name="PLoS ONE">
        <title>Genome sequence of a lancefield group C Streptococcus zooepidemicus strain causing epidemic nephritis: new information about an old disease.</title>
        <authorList>
            <person name="Beres S.B."/>
            <person name="Sesso R."/>
            <person name="Pinto S.W.L."/>
            <person name="Hoe N.P."/>
            <person name="Porcella S.F."/>
            <person name="Deleo F.R."/>
            <person name="Musser J.M."/>
        </authorList>
    </citation>
    <scope>NUCLEOTIDE SEQUENCE [LARGE SCALE GENOMIC DNA]</scope>
    <source>
        <strain>MGCS10565</strain>
    </source>
</reference>
<dbReference type="EMBL" id="CP001129">
    <property type="protein sequence ID" value="ACG61446.1"/>
    <property type="molecule type" value="Genomic_DNA"/>
</dbReference>
<dbReference type="RefSeq" id="WP_012514738.1">
    <property type="nucleotide sequence ID" value="NC_011134.1"/>
</dbReference>
<dbReference type="SMR" id="B4U507"/>
<dbReference type="GeneID" id="83703911"/>
<dbReference type="KEGG" id="sez:Sez_0063"/>
<dbReference type="HOGENOM" id="CLU_078858_2_1_9"/>
<dbReference type="Proteomes" id="UP000001873">
    <property type="component" value="Chromosome"/>
</dbReference>
<dbReference type="GO" id="GO:0022625">
    <property type="term" value="C:cytosolic large ribosomal subunit"/>
    <property type="evidence" value="ECO:0007669"/>
    <property type="project" value="TreeGrafter"/>
</dbReference>
<dbReference type="GO" id="GO:0019843">
    <property type="term" value="F:rRNA binding"/>
    <property type="evidence" value="ECO:0007669"/>
    <property type="project" value="UniProtKB-UniRule"/>
</dbReference>
<dbReference type="GO" id="GO:0003735">
    <property type="term" value="F:structural constituent of ribosome"/>
    <property type="evidence" value="ECO:0007669"/>
    <property type="project" value="InterPro"/>
</dbReference>
<dbReference type="GO" id="GO:0000049">
    <property type="term" value="F:tRNA binding"/>
    <property type="evidence" value="ECO:0007669"/>
    <property type="project" value="UniProtKB-KW"/>
</dbReference>
<dbReference type="GO" id="GO:0006412">
    <property type="term" value="P:translation"/>
    <property type="evidence" value="ECO:0007669"/>
    <property type="project" value="UniProtKB-UniRule"/>
</dbReference>
<dbReference type="CDD" id="cd01433">
    <property type="entry name" value="Ribosomal_L16_L10e"/>
    <property type="match status" value="1"/>
</dbReference>
<dbReference type="FunFam" id="3.90.1170.10:FF:000001">
    <property type="entry name" value="50S ribosomal protein L16"/>
    <property type="match status" value="1"/>
</dbReference>
<dbReference type="Gene3D" id="3.90.1170.10">
    <property type="entry name" value="Ribosomal protein L10e/L16"/>
    <property type="match status" value="1"/>
</dbReference>
<dbReference type="HAMAP" id="MF_01342">
    <property type="entry name" value="Ribosomal_uL16"/>
    <property type="match status" value="1"/>
</dbReference>
<dbReference type="InterPro" id="IPR047873">
    <property type="entry name" value="Ribosomal_uL16"/>
</dbReference>
<dbReference type="InterPro" id="IPR000114">
    <property type="entry name" value="Ribosomal_uL16_bact-type"/>
</dbReference>
<dbReference type="InterPro" id="IPR020798">
    <property type="entry name" value="Ribosomal_uL16_CS"/>
</dbReference>
<dbReference type="InterPro" id="IPR016180">
    <property type="entry name" value="Ribosomal_uL16_dom"/>
</dbReference>
<dbReference type="InterPro" id="IPR036920">
    <property type="entry name" value="Ribosomal_uL16_sf"/>
</dbReference>
<dbReference type="NCBIfam" id="TIGR01164">
    <property type="entry name" value="rplP_bact"/>
    <property type="match status" value="1"/>
</dbReference>
<dbReference type="PANTHER" id="PTHR12220">
    <property type="entry name" value="50S/60S RIBOSOMAL PROTEIN L16"/>
    <property type="match status" value="1"/>
</dbReference>
<dbReference type="PANTHER" id="PTHR12220:SF13">
    <property type="entry name" value="LARGE RIBOSOMAL SUBUNIT PROTEIN UL16M"/>
    <property type="match status" value="1"/>
</dbReference>
<dbReference type="Pfam" id="PF00252">
    <property type="entry name" value="Ribosomal_L16"/>
    <property type="match status" value="1"/>
</dbReference>
<dbReference type="PRINTS" id="PR00060">
    <property type="entry name" value="RIBOSOMALL16"/>
</dbReference>
<dbReference type="SUPFAM" id="SSF54686">
    <property type="entry name" value="Ribosomal protein L16p/L10e"/>
    <property type="match status" value="1"/>
</dbReference>
<dbReference type="PROSITE" id="PS00586">
    <property type="entry name" value="RIBOSOMAL_L16_1"/>
    <property type="match status" value="1"/>
</dbReference>
<dbReference type="PROSITE" id="PS00701">
    <property type="entry name" value="RIBOSOMAL_L16_2"/>
    <property type="match status" value="1"/>
</dbReference>
<accession>B4U507</accession>
<keyword id="KW-0687">Ribonucleoprotein</keyword>
<keyword id="KW-0689">Ribosomal protein</keyword>
<keyword id="KW-0694">RNA-binding</keyword>
<keyword id="KW-0699">rRNA-binding</keyword>
<keyword id="KW-0820">tRNA-binding</keyword>
<comment type="function">
    <text evidence="1">Binds 23S rRNA and is also seen to make contacts with the A and possibly P site tRNAs.</text>
</comment>
<comment type="subunit">
    <text evidence="1">Part of the 50S ribosomal subunit.</text>
</comment>
<comment type="similarity">
    <text evidence="1">Belongs to the universal ribosomal protein uL16 family.</text>
</comment>
<proteinExistence type="inferred from homology"/>
<protein>
    <recommendedName>
        <fullName evidence="1">Large ribosomal subunit protein uL16</fullName>
    </recommendedName>
    <alternativeName>
        <fullName evidence="2">50S ribosomal protein L16</fullName>
    </alternativeName>
</protein>
<evidence type="ECO:0000255" key="1">
    <source>
        <dbReference type="HAMAP-Rule" id="MF_01342"/>
    </source>
</evidence>
<evidence type="ECO:0000305" key="2"/>
<organism>
    <name type="scientific">Streptococcus equi subsp. zooepidemicus (strain MGCS10565)</name>
    <dbReference type="NCBI Taxonomy" id="552526"/>
    <lineage>
        <taxon>Bacteria</taxon>
        <taxon>Bacillati</taxon>
        <taxon>Bacillota</taxon>
        <taxon>Bacilli</taxon>
        <taxon>Lactobacillales</taxon>
        <taxon>Streptococcaceae</taxon>
        <taxon>Streptococcus</taxon>
    </lineage>
</organism>